<dbReference type="EC" id="2.3.2.27" evidence="3"/>
<dbReference type="EC" id="5.2.1.8" evidence="1"/>
<dbReference type="EMBL" id="CH476742">
    <property type="protein sequence ID" value="EIE88062.1"/>
    <property type="status" value="ALT_SEQ"/>
    <property type="molecule type" value="Genomic_DNA"/>
</dbReference>
<dbReference type="SMR" id="P0C1J1"/>
<dbReference type="FunCoup" id="P0C1J1">
    <property type="interactions" value="613"/>
</dbReference>
<dbReference type="STRING" id="246409.P0C1J1"/>
<dbReference type="eggNOG" id="KOG0883">
    <property type="taxonomic scope" value="Eukaryota"/>
</dbReference>
<dbReference type="InParanoid" id="P0C1J1"/>
<dbReference type="OrthoDB" id="51336at4827"/>
<dbReference type="UniPathway" id="UPA00143"/>
<dbReference type="Proteomes" id="UP000009138">
    <property type="component" value="Unassembled WGS sequence"/>
</dbReference>
<dbReference type="GO" id="GO:0071013">
    <property type="term" value="C:catalytic step 2 spliceosome"/>
    <property type="evidence" value="ECO:0007669"/>
    <property type="project" value="TreeGrafter"/>
</dbReference>
<dbReference type="GO" id="GO:0003755">
    <property type="term" value="F:peptidyl-prolyl cis-trans isomerase activity"/>
    <property type="evidence" value="ECO:0007669"/>
    <property type="project" value="UniProtKB-KW"/>
</dbReference>
<dbReference type="GO" id="GO:0061630">
    <property type="term" value="F:ubiquitin protein ligase activity"/>
    <property type="evidence" value="ECO:0007669"/>
    <property type="project" value="TreeGrafter"/>
</dbReference>
<dbReference type="GO" id="GO:0006457">
    <property type="term" value="P:protein folding"/>
    <property type="evidence" value="ECO:0007669"/>
    <property type="project" value="InterPro"/>
</dbReference>
<dbReference type="GO" id="GO:0000209">
    <property type="term" value="P:protein polyubiquitination"/>
    <property type="evidence" value="ECO:0007669"/>
    <property type="project" value="TreeGrafter"/>
</dbReference>
<dbReference type="CDD" id="cd01923">
    <property type="entry name" value="cyclophilin_RING"/>
    <property type="match status" value="1"/>
</dbReference>
<dbReference type="CDD" id="cd16663">
    <property type="entry name" value="RING-Ubox_PPIL2"/>
    <property type="match status" value="1"/>
</dbReference>
<dbReference type="FunFam" id="3.30.40.10:FF:000079">
    <property type="entry name" value="Peptidyl-prolyl cis-trans isomerase 2"/>
    <property type="match status" value="1"/>
</dbReference>
<dbReference type="FunFam" id="2.40.100.10:FF:000014">
    <property type="entry name" value="Peptidyl-prolyl cis-trans isomerase cyp65"/>
    <property type="match status" value="1"/>
</dbReference>
<dbReference type="Gene3D" id="2.40.100.10">
    <property type="entry name" value="Cyclophilin-like"/>
    <property type="match status" value="1"/>
</dbReference>
<dbReference type="Gene3D" id="3.30.40.10">
    <property type="entry name" value="Zinc/RING finger domain, C3HC4 (zinc finger)"/>
    <property type="match status" value="1"/>
</dbReference>
<dbReference type="InterPro" id="IPR029000">
    <property type="entry name" value="Cyclophilin-like_dom_sf"/>
</dbReference>
<dbReference type="InterPro" id="IPR020892">
    <property type="entry name" value="Cyclophilin-type_PPIase_CS"/>
</dbReference>
<dbReference type="InterPro" id="IPR002130">
    <property type="entry name" value="Cyclophilin-type_PPIase_dom"/>
</dbReference>
<dbReference type="InterPro" id="IPR044666">
    <property type="entry name" value="Cyclophilin_A-like"/>
</dbReference>
<dbReference type="InterPro" id="IPR026951">
    <property type="entry name" value="PPIL2_U-box_dom"/>
</dbReference>
<dbReference type="InterPro" id="IPR003613">
    <property type="entry name" value="Ubox_domain"/>
</dbReference>
<dbReference type="InterPro" id="IPR013083">
    <property type="entry name" value="Znf_RING/FYVE/PHD"/>
</dbReference>
<dbReference type="PANTHER" id="PTHR45625">
    <property type="entry name" value="PEPTIDYL-PROLYL CIS-TRANS ISOMERASE-RELATED"/>
    <property type="match status" value="1"/>
</dbReference>
<dbReference type="PANTHER" id="PTHR45625:SF1">
    <property type="entry name" value="RING-TYPE E3 UBIQUITIN-PROTEIN LIGASE PPIL2"/>
    <property type="match status" value="1"/>
</dbReference>
<dbReference type="Pfam" id="PF00160">
    <property type="entry name" value="Pro_isomerase"/>
    <property type="match status" value="1"/>
</dbReference>
<dbReference type="Pfam" id="PF04641">
    <property type="entry name" value="Rtf2"/>
    <property type="match status" value="1"/>
</dbReference>
<dbReference type="PRINTS" id="PR00153">
    <property type="entry name" value="CSAPPISMRASE"/>
</dbReference>
<dbReference type="SMART" id="SM00504">
    <property type="entry name" value="Ubox"/>
    <property type="match status" value="1"/>
</dbReference>
<dbReference type="SUPFAM" id="SSF50891">
    <property type="entry name" value="Cyclophilin-like"/>
    <property type="match status" value="1"/>
</dbReference>
<dbReference type="SUPFAM" id="SSF57850">
    <property type="entry name" value="RING/U-box"/>
    <property type="match status" value="1"/>
</dbReference>
<dbReference type="PROSITE" id="PS00170">
    <property type="entry name" value="CSA_PPIASE_1"/>
    <property type="match status" value="1"/>
</dbReference>
<dbReference type="PROSITE" id="PS50072">
    <property type="entry name" value="CSA_PPIASE_2"/>
    <property type="match status" value="1"/>
</dbReference>
<dbReference type="PROSITE" id="PS51698">
    <property type="entry name" value="U_BOX"/>
    <property type="match status" value="1"/>
</dbReference>
<protein>
    <recommendedName>
        <fullName evidence="7">Peptidyl-prolyl cis-trans isomerase-like 2</fullName>
        <shortName>PPIase</shortName>
        <ecNumber evidence="3">2.3.2.27</ecNumber>
        <ecNumber evidence="1">5.2.1.8</ecNumber>
    </recommendedName>
    <alternativeName>
        <fullName>Cyclophilin-60</fullName>
    </alternativeName>
    <alternativeName>
        <fullName>Cyclophilin-like protein Cyp-60</fullName>
    </alternativeName>
    <alternativeName>
        <fullName evidence="7">RING-type E3 ubiquitin transferase isomerase-like 2</fullName>
    </alternativeName>
    <alternativeName>
        <fullName>Rotamase</fullName>
    </alternativeName>
</protein>
<name>PPIL2_RHIO9</name>
<keyword id="KW-0175">Coiled coil</keyword>
<keyword id="KW-0413">Isomerase</keyword>
<keyword id="KW-0539">Nucleus</keyword>
<keyword id="KW-1185">Reference proteome</keyword>
<keyword id="KW-0697">Rotamase</keyword>
<keyword id="KW-0808">Transferase</keyword>
<keyword id="KW-0833">Ubl conjugation pathway</keyword>
<proteinExistence type="inferred from homology"/>
<reference key="1">
    <citation type="journal article" date="2009" name="PLoS Genet.">
        <title>Genomic analysis of the basal lineage fungus Rhizopus oryzae reveals a whole-genome duplication.</title>
        <authorList>
            <person name="Ma L.-J."/>
            <person name="Ibrahim A.S."/>
            <person name="Skory C."/>
            <person name="Grabherr M.G."/>
            <person name="Burger G."/>
            <person name="Butler M."/>
            <person name="Elias M."/>
            <person name="Idnurm A."/>
            <person name="Lang B.F."/>
            <person name="Sone T."/>
            <person name="Abe A."/>
            <person name="Calvo S.E."/>
            <person name="Corrochano L.M."/>
            <person name="Engels R."/>
            <person name="Fu J."/>
            <person name="Hansberg W."/>
            <person name="Kim J.-M."/>
            <person name="Kodira C.D."/>
            <person name="Koehrsen M.J."/>
            <person name="Liu B."/>
            <person name="Miranda-Saavedra D."/>
            <person name="O'Leary S."/>
            <person name="Ortiz-Castellanos L."/>
            <person name="Poulter R."/>
            <person name="Rodriguez-Romero J."/>
            <person name="Ruiz-Herrera J."/>
            <person name="Shen Y.-Q."/>
            <person name="Zeng Q."/>
            <person name="Galagan J."/>
            <person name="Birren B.W."/>
            <person name="Cuomo C.A."/>
            <person name="Wickes B.L."/>
        </authorList>
    </citation>
    <scope>NUCLEOTIDE SEQUENCE [LARGE SCALE GENOMIC DNA]</scope>
    <source>
        <strain>RA 99-880 / ATCC MYA-4621 / FGSC 9543 / NRRL 43880</strain>
    </source>
</reference>
<reference key="2">
    <citation type="journal article" date="2006" name="BMC Genomics">
        <title>Identification and comparative analysis of sixteen fungal peptidyl-prolyl cis/trans isomerase repertoires.</title>
        <authorList>
            <person name="Pemberton T.J."/>
        </authorList>
    </citation>
    <scope>REVISION OF GENE MODEL</scope>
</reference>
<comment type="function">
    <text evidence="1 3">May catalyze the cis-trans isomerization of proline imidic peptide bonds in oligopeptides thereby assisting the folding of proteins. May also function as a chaperone, playing a role in intracellular transport of proteins. May also have a protein ubiquitin ligase activity acting as an E3 ubiquitin protein ligase or as a ubiquitin-ubiquitin ligase promoting elongation of ubiquitin chains on proteins.</text>
</comment>
<comment type="catalytic activity">
    <reaction>
        <text>[protein]-peptidylproline (omega=180) = [protein]-peptidylproline (omega=0)</text>
        <dbReference type="Rhea" id="RHEA:16237"/>
        <dbReference type="Rhea" id="RHEA-COMP:10747"/>
        <dbReference type="Rhea" id="RHEA-COMP:10748"/>
        <dbReference type="ChEBI" id="CHEBI:83833"/>
        <dbReference type="ChEBI" id="CHEBI:83834"/>
        <dbReference type="EC" id="5.2.1.8"/>
    </reaction>
</comment>
<comment type="catalytic activity">
    <reaction evidence="3">
        <text>S-ubiquitinyl-[E2 ubiquitin-conjugating enzyme]-L-cysteine + [acceptor protein]-L-lysine = [E2 ubiquitin-conjugating enzyme]-L-cysteine + N(6)-ubiquitinyl-[acceptor protein]-L-lysine.</text>
        <dbReference type="EC" id="2.3.2.27"/>
    </reaction>
</comment>
<comment type="pathway">
    <text evidence="3">Protein modification; protein ubiquitination.</text>
</comment>
<comment type="subcellular location">
    <subcellularLocation>
        <location evidence="2 3">Nucleus</location>
    </subcellularLocation>
</comment>
<comment type="similarity">
    <text evidence="7">Belongs to the cyclophilin-type PPIase family. PPIL2 subfamily.</text>
</comment>
<comment type="sequence caution" evidence="7">
    <conflict type="erroneous gene model prediction">
        <sequence resource="EMBL-CDS" id="EIE88062"/>
    </conflict>
</comment>
<gene>
    <name type="primary">cyp14</name>
    <name type="ORF">RO3G_12773</name>
</gene>
<evidence type="ECO:0000250" key="1">
    <source>
        <dbReference type="UniProtKB" id="Q08752"/>
    </source>
</evidence>
<evidence type="ECO:0000250" key="2">
    <source>
        <dbReference type="UniProtKB" id="Q09928"/>
    </source>
</evidence>
<evidence type="ECO:0000250" key="3">
    <source>
        <dbReference type="UniProtKB" id="Q13356"/>
    </source>
</evidence>
<evidence type="ECO:0000255" key="4"/>
<evidence type="ECO:0000255" key="5">
    <source>
        <dbReference type="PROSITE-ProRule" id="PRU00156"/>
    </source>
</evidence>
<evidence type="ECO:0000256" key="6">
    <source>
        <dbReference type="SAM" id="MobiDB-lite"/>
    </source>
</evidence>
<evidence type="ECO:0000305" key="7"/>
<sequence length="533" mass="61062">MGKWTDKLYITHSEWSGEVGQHSASSGITGRNSSGGFKRLPFYCCSLSLQPFEHPVCTPDGIIFDLMNIIPYIKKYGTNPVTGEKLETKNLIKLHFHKNDKDEYFCPVTYKVFSDHTTIAAIKTTGNVFAYDTLEKLNIKAKHWKDLLTDEPFTRKDIIMLQDPHNLEKKDMSKFDYLKNNKPEELEKRKPINNINVAGMGNTKKVFDELQKKNSNEDDNKAIEKKEEIPTSFHKKRETLPYNAAHYTTGEAAESFTSTVVNAYTASTRALIDEDEFMYKKIKKKSYARIITNYGNINVELFSDKKPKTCHNFIELAKTGYYNDVIFHRNIKKFMIQGGDPTGTGKGGESIWKRYFPDEIKTTLKHDARGVLSMANRGKDTNGSQFFITYAAAPHLDGLHTVFGKVVGGLDVLSKLESIPVDEKDRPEREIKIKQIQMFVDPFEEYQRRLKNKLTHEANAERENEEMRKRREKEEKMGWFGPSVPKIQTSGGGGVGKYLQSTKRDNSEISNEGEELQKKQKITKTTFGNFDNF</sequence>
<accession>P0C1J1</accession>
<accession>I1CHY2</accession>
<organism>
    <name type="scientific">Rhizopus delemar (strain RA 99-880 / ATCC MYA-4621 / FGSC 9543 / NRRL 43880)</name>
    <name type="common">Mucormycosis agent</name>
    <name type="synonym">Rhizopus arrhizus var. delemar</name>
    <dbReference type="NCBI Taxonomy" id="246409"/>
    <lineage>
        <taxon>Eukaryota</taxon>
        <taxon>Fungi</taxon>
        <taxon>Fungi incertae sedis</taxon>
        <taxon>Mucoromycota</taxon>
        <taxon>Mucoromycotina</taxon>
        <taxon>Mucoromycetes</taxon>
        <taxon>Mucorales</taxon>
        <taxon>Mucorineae</taxon>
        <taxon>Rhizopodaceae</taxon>
        <taxon>Rhizopus</taxon>
    </lineage>
</organism>
<feature type="chain" id="PRO_0000244724" description="Peptidyl-prolyl cis-trans isomerase-like 2">
    <location>
        <begin position="1"/>
        <end position="533"/>
    </location>
</feature>
<feature type="domain" description="U-box">
    <location>
        <begin position="38"/>
        <end position="111"/>
    </location>
</feature>
<feature type="domain" description="PPIase cyclophilin-type" evidence="5">
    <location>
        <begin position="284"/>
        <end position="438"/>
    </location>
</feature>
<feature type="region of interest" description="Disordered" evidence="6">
    <location>
        <begin position="454"/>
        <end position="533"/>
    </location>
</feature>
<feature type="coiled-coil region" evidence="4">
    <location>
        <begin position="443"/>
        <end position="519"/>
    </location>
</feature>
<feature type="compositionally biased region" description="Basic and acidic residues" evidence="6">
    <location>
        <begin position="454"/>
        <end position="477"/>
    </location>
</feature>
<feature type="compositionally biased region" description="Polar residues" evidence="6">
    <location>
        <begin position="523"/>
        <end position="533"/>
    </location>
</feature>